<feature type="chain" id="PRO_0000152686" description="Lysine--tRNA ligase">
    <location>
        <begin position="1"/>
        <end position="496"/>
    </location>
</feature>
<feature type="binding site" evidence="1">
    <location>
        <position position="409"/>
    </location>
    <ligand>
        <name>Mg(2+)</name>
        <dbReference type="ChEBI" id="CHEBI:18420"/>
        <label>1</label>
    </ligand>
</feature>
<feature type="binding site" evidence="1">
    <location>
        <position position="416"/>
    </location>
    <ligand>
        <name>Mg(2+)</name>
        <dbReference type="ChEBI" id="CHEBI:18420"/>
        <label>1</label>
    </ligand>
</feature>
<feature type="binding site" evidence="1">
    <location>
        <position position="416"/>
    </location>
    <ligand>
        <name>Mg(2+)</name>
        <dbReference type="ChEBI" id="CHEBI:18420"/>
        <label>2</label>
    </ligand>
</feature>
<reference key="1">
    <citation type="journal article" date="2002" name="Proc. Natl. Acad. Sci. U.S.A.">
        <title>Genome sequence of Streptococcus mutans UA159, a cariogenic dental pathogen.</title>
        <authorList>
            <person name="Ajdic D.J."/>
            <person name="McShan W.M."/>
            <person name="McLaughlin R.E."/>
            <person name="Savic G."/>
            <person name="Chang J."/>
            <person name="Carson M.B."/>
            <person name="Primeaux C."/>
            <person name="Tian R."/>
            <person name="Kenton S."/>
            <person name="Jia H.G."/>
            <person name="Lin S.P."/>
            <person name="Qian Y."/>
            <person name="Li S."/>
            <person name="Zhu H."/>
            <person name="Najar F.Z."/>
            <person name="Lai H."/>
            <person name="White J."/>
            <person name="Roe B.A."/>
            <person name="Ferretti J.J."/>
        </authorList>
    </citation>
    <scope>NUCLEOTIDE SEQUENCE [LARGE SCALE GENOMIC DNA]</scope>
    <source>
        <strain>ATCC 700610 / UA159</strain>
    </source>
</reference>
<gene>
    <name evidence="1" type="primary">lysS</name>
    <name type="ordered locus">SMU_773c</name>
</gene>
<dbReference type="EC" id="6.1.1.6" evidence="1"/>
<dbReference type="EMBL" id="AE014133">
    <property type="protein sequence ID" value="AAN58493.1"/>
    <property type="molecule type" value="Genomic_DNA"/>
</dbReference>
<dbReference type="RefSeq" id="NP_721187.1">
    <property type="nucleotide sequence ID" value="NC_004350.2"/>
</dbReference>
<dbReference type="RefSeq" id="WP_002261927.1">
    <property type="nucleotide sequence ID" value="NC_004350.2"/>
</dbReference>
<dbReference type="SMR" id="Q8DUW8"/>
<dbReference type="STRING" id="210007.SMU_773c"/>
<dbReference type="KEGG" id="smu:SMU_773c"/>
<dbReference type="PATRIC" id="fig|210007.7.peg.684"/>
<dbReference type="eggNOG" id="COG1190">
    <property type="taxonomic scope" value="Bacteria"/>
</dbReference>
<dbReference type="HOGENOM" id="CLU_008255_6_0_9"/>
<dbReference type="OrthoDB" id="9801152at2"/>
<dbReference type="PhylomeDB" id="Q8DUW8"/>
<dbReference type="Proteomes" id="UP000002512">
    <property type="component" value="Chromosome"/>
</dbReference>
<dbReference type="GO" id="GO:0005829">
    <property type="term" value="C:cytosol"/>
    <property type="evidence" value="ECO:0007669"/>
    <property type="project" value="TreeGrafter"/>
</dbReference>
<dbReference type="GO" id="GO:0005524">
    <property type="term" value="F:ATP binding"/>
    <property type="evidence" value="ECO:0007669"/>
    <property type="project" value="UniProtKB-UniRule"/>
</dbReference>
<dbReference type="GO" id="GO:0140096">
    <property type="term" value="F:catalytic activity, acting on a protein"/>
    <property type="evidence" value="ECO:0007669"/>
    <property type="project" value="UniProtKB-ARBA"/>
</dbReference>
<dbReference type="GO" id="GO:0004824">
    <property type="term" value="F:lysine-tRNA ligase activity"/>
    <property type="evidence" value="ECO:0007669"/>
    <property type="project" value="UniProtKB-UniRule"/>
</dbReference>
<dbReference type="GO" id="GO:0000287">
    <property type="term" value="F:magnesium ion binding"/>
    <property type="evidence" value="ECO:0007669"/>
    <property type="project" value="UniProtKB-UniRule"/>
</dbReference>
<dbReference type="GO" id="GO:0016740">
    <property type="term" value="F:transferase activity"/>
    <property type="evidence" value="ECO:0007669"/>
    <property type="project" value="UniProtKB-ARBA"/>
</dbReference>
<dbReference type="GO" id="GO:0000049">
    <property type="term" value="F:tRNA binding"/>
    <property type="evidence" value="ECO:0007669"/>
    <property type="project" value="TreeGrafter"/>
</dbReference>
<dbReference type="GO" id="GO:0006430">
    <property type="term" value="P:lysyl-tRNA aminoacylation"/>
    <property type="evidence" value="ECO:0007669"/>
    <property type="project" value="UniProtKB-UniRule"/>
</dbReference>
<dbReference type="CDD" id="cd00775">
    <property type="entry name" value="LysRS_core"/>
    <property type="match status" value="1"/>
</dbReference>
<dbReference type="CDD" id="cd04322">
    <property type="entry name" value="LysRS_N"/>
    <property type="match status" value="1"/>
</dbReference>
<dbReference type="FunFam" id="2.40.50.140:FF:000024">
    <property type="entry name" value="Lysine--tRNA ligase"/>
    <property type="match status" value="1"/>
</dbReference>
<dbReference type="FunFam" id="3.30.930.10:FF:000001">
    <property type="entry name" value="Lysine--tRNA ligase"/>
    <property type="match status" value="1"/>
</dbReference>
<dbReference type="Gene3D" id="3.30.930.10">
    <property type="entry name" value="Bira Bifunctional Protein, Domain 2"/>
    <property type="match status" value="1"/>
</dbReference>
<dbReference type="Gene3D" id="2.40.50.140">
    <property type="entry name" value="Nucleic acid-binding proteins"/>
    <property type="match status" value="1"/>
</dbReference>
<dbReference type="HAMAP" id="MF_00252">
    <property type="entry name" value="Lys_tRNA_synth_class2"/>
    <property type="match status" value="1"/>
</dbReference>
<dbReference type="InterPro" id="IPR004364">
    <property type="entry name" value="Aa-tRNA-synt_II"/>
</dbReference>
<dbReference type="InterPro" id="IPR006195">
    <property type="entry name" value="aa-tRNA-synth_II"/>
</dbReference>
<dbReference type="InterPro" id="IPR045864">
    <property type="entry name" value="aa-tRNA-synth_II/BPL/LPL"/>
</dbReference>
<dbReference type="InterPro" id="IPR002313">
    <property type="entry name" value="Lys-tRNA-ligase_II"/>
</dbReference>
<dbReference type="InterPro" id="IPR044136">
    <property type="entry name" value="Lys-tRNA-ligase_II_N"/>
</dbReference>
<dbReference type="InterPro" id="IPR018149">
    <property type="entry name" value="Lys-tRNA-synth_II_C"/>
</dbReference>
<dbReference type="InterPro" id="IPR012340">
    <property type="entry name" value="NA-bd_OB-fold"/>
</dbReference>
<dbReference type="InterPro" id="IPR004365">
    <property type="entry name" value="NA-bd_OB_tRNA"/>
</dbReference>
<dbReference type="NCBIfam" id="TIGR00499">
    <property type="entry name" value="lysS_bact"/>
    <property type="match status" value="1"/>
</dbReference>
<dbReference type="NCBIfam" id="NF001756">
    <property type="entry name" value="PRK00484.1"/>
    <property type="match status" value="1"/>
</dbReference>
<dbReference type="PANTHER" id="PTHR42918:SF15">
    <property type="entry name" value="LYSINE--TRNA LIGASE, CHLOROPLASTIC_MITOCHONDRIAL"/>
    <property type="match status" value="1"/>
</dbReference>
<dbReference type="PANTHER" id="PTHR42918">
    <property type="entry name" value="LYSYL-TRNA SYNTHETASE"/>
    <property type="match status" value="1"/>
</dbReference>
<dbReference type="Pfam" id="PF00152">
    <property type="entry name" value="tRNA-synt_2"/>
    <property type="match status" value="1"/>
</dbReference>
<dbReference type="Pfam" id="PF01336">
    <property type="entry name" value="tRNA_anti-codon"/>
    <property type="match status" value="1"/>
</dbReference>
<dbReference type="PRINTS" id="PR00982">
    <property type="entry name" value="TRNASYNTHLYS"/>
</dbReference>
<dbReference type="SUPFAM" id="SSF55681">
    <property type="entry name" value="Class II aaRS and biotin synthetases"/>
    <property type="match status" value="1"/>
</dbReference>
<dbReference type="SUPFAM" id="SSF50249">
    <property type="entry name" value="Nucleic acid-binding proteins"/>
    <property type="match status" value="1"/>
</dbReference>
<dbReference type="PROSITE" id="PS50862">
    <property type="entry name" value="AA_TRNA_LIGASE_II"/>
    <property type="match status" value="1"/>
</dbReference>
<organism>
    <name type="scientific">Streptococcus mutans serotype c (strain ATCC 700610 / UA159)</name>
    <dbReference type="NCBI Taxonomy" id="210007"/>
    <lineage>
        <taxon>Bacteria</taxon>
        <taxon>Bacillati</taxon>
        <taxon>Bacillota</taxon>
        <taxon>Bacilli</taxon>
        <taxon>Lactobacillales</taxon>
        <taxon>Streptococcaceae</taxon>
        <taxon>Streptococcus</taxon>
    </lineage>
</organism>
<name>SYK_STRMU</name>
<accession>Q8DUW8</accession>
<sequence length="496" mass="56379">MSHQHTEELNDQQIVRREKMEALTEQGIDPFGKRFERTATSGQLKEKYADKTKEELHDINETATIAGRLMTKRGKGKVGFAHLQDREGQIQIYVRKDTVGDDNYQIFKKADIGDFLGVEGEIMRTDMGELSIKATHITHLSKALRPLPEKFHGLTDVETIYRKRYLDLISNRESLERFITRSKIISEIRRYLDGLGFLEVETPVLHNEAGGAAAKPFTTHHNAQDMDMVLRIATELHLKRLIVGGMERVYEMGRIFRNEGMDATHNPEFTSIEVYQAYADFEDIMDLTEGIVQHAATAVKGDGPITYQGTEIKINEPFKRAHIVDLIKEVTGVDFWKEMTLAEAQALAQEKNVPLEKHYTSVGHIINAFFEEFVEETLIQPIFVYGHPVEVSPLAKKNADDPRFTDRFELFIMTKEYGNAFTELNDPIDQLERFKAQAAAKELGDDEATGIDYDYVEALEYGMPPTGGLGIGIDRLVMLLTDTTTIRDVLLFPTMK</sequence>
<protein>
    <recommendedName>
        <fullName evidence="1">Lysine--tRNA ligase</fullName>
        <ecNumber evidence="1">6.1.1.6</ecNumber>
    </recommendedName>
    <alternativeName>
        <fullName evidence="1">Lysyl-tRNA synthetase</fullName>
        <shortName evidence="1">LysRS</shortName>
    </alternativeName>
</protein>
<keyword id="KW-0030">Aminoacyl-tRNA synthetase</keyword>
<keyword id="KW-0067">ATP-binding</keyword>
<keyword id="KW-0963">Cytoplasm</keyword>
<keyword id="KW-0436">Ligase</keyword>
<keyword id="KW-0460">Magnesium</keyword>
<keyword id="KW-0479">Metal-binding</keyword>
<keyword id="KW-0547">Nucleotide-binding</keyword>
<keyword id="KW-0648">Protein biosynthesis</keyword>
<keyword id="KW-1185">Reference proteome</keyword>
<comment type="catalytic activity">
    <reaction evidence="1">
        <text>tRNA(Lys) + L-lysine + ATP = L-lysyl-tRNA(Lys) + AMP + diphosphate</text>
        <dbReference type="Rhea" id="RHEA:20792"/>
        <dbReference type="Rhea" id="RHEA-COMP:9696"/>
        <dbReference type="Rhea" id="RHEA-COMP:9697"/>
        <dbReference type="ChEBI" id="CHEBI:30616"/>
        <dbReference type="ChEBI" id="CHEBI:32551"/>
        <dbReference type="ChEBI" id="CHEBI:33019"/>
        <dbReference type="ChEBI" id="CHEBI:78442"/>
        <dbReference type="ChEBI" id="CHEBI:78529"/>
        <dbReference type="ChEBI" id="CHEBI:456215"/>
        <dbReference type="EC" id="6.1.1.6"/>
    </reaction>
</comment>
<comment type="cofactor">
    <cofactor evidence="1">
        <name>Mg(2+)</name>
        <dbReference type="ChEBI" id="CHEBI:18420"/>
    </cofactor>
    <text evidence="1">Binds 3 Mg(2+) ions per subunit.</text>
</comment>
<comment type="subunit">
    <text evidence="1">Homodimer.</text>
</comment>
<comment type="subcellular location">
    <subcellularLocation>
        <location evidence="1">Cytoplasm</location>
    </subcellularLocation>
</comment>
<comment type="similarity">
    <text evidence="1">Belongs to the class-II aminoacyl-tRNA synthetase family.</text>
</comment>
<evidence type="ECO:0000255" key="1">
    <source>
        <dbReference type="HAMAP-Rule" id="MF_00252"/>
    </source>
</evidence>
<proteinExistence type="inferred from homology"/>